<gene>
    <name evidence="10" type="primary">eutR</name>
    <name type="ordered locus">STM2454</name>
</gene>
<reference key="1">
    <citation type="journal article" date="1999" name="J. Bacteriol.">
        <title>The 17-gene ethanolamine (eut) operon of Salmonella typhimurium encodes five homologues of carboxysome shell proteins.</title>
        <authorList>
            <person name="Kofoid E.C."/>
            <person name="Rappleye C.A."/>
            <person name="Stojiljkovic I."/>
            <person name="Roth J.R."/>
        </authorList>
    </citation>
    <scope>NUCLEOTIDE SEQUENCE [GENOMIC DNA]</scope>
    <scope>INDUCTION</scope>
    <source>
        <strain>LT2</strain>
    </source>
</reference>
<reference key="2">
    <citation type="journal article" date="2001" name="Nature">
        <title>Complete genome sequence of Salmonella enterica serovar Typhimurium LT2.</title>
        <authorList>
            <person name="McClelland M."/>
            <person name="Sanderson K.E."/>
            <person name="Spieth J."/>
            <person name="Clifton S.W."/>
            <person name="Latreille P."/>
            <person name="Courtney L."/>
            <person name="Porwollik S."/>
            <person name="Ali J."/>
            <person name="Dante M."/>
            <person name="Du F."/>
            <person name="Hou S."/>
            <person name="Layman D."/>
            <person name="Leonard S."/>
            <person name="Nguyen C."/>
            <person name="Scott K."/>
            <person name="Holmes A."/>
            <person name="Grewal N."/>
            <person name="Mulvaney E."/>
            <person name="Ryan E."/>
            <person name="Sun H."/>
            <person name="Florea L."/>
            <person name="Miller W."/>
            <person name="Stoneking T."/>
            <person name="Nhan M."/>
            <person name="Waterston R."/>
            <person name="Wilson R.K."/>
        </authorList>
    </citation>
    <scope>NUCLEOTIDE SEQUENCE [LARGE SCALE GENOMIC DNA]</scope>
    <source>
        <strain>LT2 / SGSC1412 / ATCC 700720</strain>
    </source>
</reference>
<reference key="3">
    <citation type="journal article" date="1988" name="J. Bacteriol.">
        <title>Ethanolamine utilization in Salmonella typhimurium.</title>
        <authorList>
            <person name="Roof D.M."/>
            <person name="Roth J.R."/>
        </authorList>
    </citation>
    <scope>FUNCTION</scope>
    <scope>PATHWAY</scope>
    <scope>OPERON</scope>
    <scope>INDUCTION BY ETHANOLAMINE AND COBALAMIN</scope>
    <source>
        <strain>LT2</strain>
    </source>
</reference>
<reference key="4">
    <citation type="journal article" date="1989" name="J. Bacteriol.">
        <title>Functions required for vitamin B12-dependent ethanolamine utilization in Salmonella typhimurium.</title>
        <authorList>
            <person name="Roof D.M."/>
            <person name="Roth J.R."/>
        </authorList>
    </citation>
    <scope>FUNCTION</scope>
    <scope>INDUCTION</scope>
    <scope>DISRUPTION PHENOTYPE</scope>
    <source>
        <strain>LT2</strain>
    </source>
</reference>
<reference key="5">
    <citation type="journal article" date="1992" name="J. Bacteriol.">
        <title>Autogenous regulation of ethanolamine utilization by a transcriptional activator of the eut operon in Salmonella typhimurium.</title>
        <authorList>
            <person name="Roof D.M."/>
            <person name="Roth J.R."/>
        </authorList>
    </citation>
    <scope>FUNCTION</scope>
    <scope>PATHWAY</scope>
    <scope>INDUCTION BY ETHANOLAMINE AND COBALAMIN</scope>
    <source>
        <strain>LT2</strain>
    </source>
</reference>
<reference key="6">
    <citation type="journal article" date="1994" name="J. Bacteriol.">
        <title>A rationale for autoinduction of a transcriptional activator: ethanolamine ammonia-lyase (EutBC) and the operon activator (EutR) compete for adenosyl-cobalamin in Salmonella typhimurium.</title>
        <authorList>
            <person name="Sheppard D.E."/>
            <person name="Roth J.R."/>
        </authorList>
    </citation>
    <scope>FUNCTION</scope>
    <scope>INDUCTION BY ETHANOLAMINE AND ADENOSYLCOBALAMIN</scope>
    <source>
        <strain>LT2</strain>
    </source>
</reference>
<reference key="7">
    <citation type="journal article" date="2015" name="PLoS Pathog.">
        <title>Ethanolamine Signaling Promotes Salmonella Niche Recognition and Adaptation during Infection.</title>
        <authorList>
            <person name="Anderson C.J."/>
            <person name="Clark D.E."/>
            <person name="Adli M."/>
            <person name="Kendall M.M."/>
        </authorList>
    </citation>
    <scope>FUNCTION</scope>
    <scope>REGULON</scope>
    <scope>INDUCTION IN MACROPHAGES AND DURING MOUSE INFECTION</scope>
    <scope>DISRUPTION PHENOTYPE</scope>
    <scope>DNA-BINDING</scope>
    <source>
        <strain>SL1344</strain>
    </source>
</reference>
<reference key="8">
    <citation type="journal article" date="2015" name="PLoS Pathog.">
        <title>Correction: Ethanolamine Signaling Promotes Salmonella Niche Recognition and Adaptation during Infection.</title>
        <authorList>
            <person name="Anderson C.J."/>
            <person name="Clark D.E."/>
            <person name="Adli M."/>
            <person name="Kendall M.M."/>
        </authorList>
    </citation>
    <scope>ERRATUM OF PUBMED:26565973</scope>
</reference>
<reference key="9">
    <citation type="journal article" date="2018" name="Infect. Immun.">
        <title>The Ethanolamine Permease EutH Promotes Vacuole Adaptation of Salmonella enterica and Listeria monocytogenes during Macrophage Infection.</title>
        <authorList>
            <person name="Anderson C.J."/>
            <person name="Satkovich J."/>
            <person name="Koeseoglu V.K."/>
            <person name="Agaisse H."/>
            <person name="Kendall M.M."/>
        </authorList>
    </citation>
    <scope>DISRUPTION PHENOTYPE</scope>
    <source>
        <strain>SL1344</strain>
    </source>
</reference>
<dbReference type="EMBL" id="AF093749">
    <property type="protein sequence ID" value="AAC78127.1"/>
    <property type="molecule type" value="Genomic_DNA"/>
</dbReference>
<dbReference type="EMBL" id="AE006468">
    <property type="protein sequence ID" value="AAL21348.1"/>
    <property type="molecule type" value="Genomic_DNA"/>
</dbReference>
<dbReference type="RefSeq" id="NP_461389.1">
    <property type="nucleotide sequence ID" value="NC_003197.2"/>
</dbReference>
<dbReference type="RefSeq" id="WP_000753665.1">
    <property type="nucleotide sequence ID" value="NC_003197.2"/>
</dbReference>
<dbReference type="SMR" id="Q9ZFU7"/>
<dbReference type="STRING" id="99287.STM2454"/>
<dbReference type="PaxDb" id="99287-STM2454"/>
<dbReference type="GeneID" id="1253976"/>
<dbReference type="KEGG" id="stm:STM2454"/>
<dbReference type="PATRIC" id="fig|99287.12.peg.2592"/>
<dbReference type="HOGENOM" id="CLU_047930_2_0_6"/>
<dbReference type="OMA" id="EAAMQWG"/>
<dbReference type="PhylomeDB" id="Q9ZFU7"/>
<dbReference type="BioCyc" id="SENT99287:STM2454-MONOMER"/>
<dbReference type="UniPathway" id="UPA00560"/>
<dbReference type="PHI-base" id="PHI:5299"/>
<dbReference type="Proteomes" id="UP000001014">
    <property type="component" value="Chromosome"/>
</dbReference>
<dbReference type="GO" id="GO:0000987">
    <property type="term" value="F:cis-regulatory region sequence-specific DNA binding"/>
    <property type="evidence" value="ECO:0000318"/>
    <property type="project" value="GO_Central"/>
</dbReference>
<dbReference type="GO" id="GO:0003700">
    <property type="term" value="F:DNA-binding transcription factor activity"/>
    <property type="evidence" value="ECO:0000318"/>
    <property type="project" value="GO_Central"/>
</dbReference>
<dbReference type="GO" id="GO:0046336">
    <property type="term" value="P:ethanolamine catabolic process"/>
    <property type="evidence" value="ECO:0007669"/>
    <property type="project" value="UniProtKB-UniPathway"/>
</dbReference>
<dbReference type="GO" id="GO:0006355">
    <property type="term" value="P:regulation of DNA-templated transcription"/>
    <property type="evidence" value="ECO:0000318"/>
    <property type="project" value="GO_Central"/>
</dbReference>
<dbReference type="FunFam" id="1.10.10.60:FF:000153">
    <property type="entry name" value="HTH-type transcriptional regulator EutR"/>
    <property type="match status" value="1"/>
</dbReference>
<dbReference type="Gene3D" id="1.10.10.60">
    <property type="entry name" value="Homeodomain-like"/>
    <property type="match status" value="1"/>
</dbReference>
<dbReference type="InterPro" id="IPR050204">
    <property type="entry name" value="AraC_XylS_family_regulators"/>
</dbReference>
<dbReference type="InterPro" id="IPR009057">
    <property type="entry name" value="Homeodomain-like_sf"/>
</dbReference>
<dbReference type="InterPro" id="IPR018060">
    <property type="entry name" value="HTH_AraC"/>
</dbReference>
<dbReference type="InterPro" id="IPR018062">
    <property type="entry name" value="HTH_AraC-typ_CS"/>
</dbReference>
<dbReference type="NCBIfam" id="NF007522">
    <property type="entry name" value="PRK10130.1"/>
    <property type="match status" value="1"/>
</dbReference>
<dbReference type="PANTHER" id="PTHR46796:SF12">
    <property type="entry name" value="HTH-TYPE DNA-BINDING TRANSCRIPTIONAL ACTIVATOR EUTR"/>
    <property type="match status" value="1"/>
</dbReference>
<dbReference type="PANTHER" id="PTHR46796">
    <property type="entry name" value="HTH-TYPE TRANSCRIPTIONAL ACTIVATOR RHAS-RELATED"/>
    <property type="match status" value="1"/>
</dbReference>
<dbReference type="Pfam" id="PF12833">
    <property type="entry name" value="HTH_18"/>
    <property type="match status" value="1"/>
</dbReference>
<dbReference type="SMART" id="SM00342">
    <property type="entry name" value="HTH_ARAC"/>
    <property type="match status" value="1"/>
</dbReference>
<dbReference type="SUPFAM" id="SSF46689">
    <property type="entry name" value="Homeodomain-like"/>
    <property type="match status" value="1"/>
</dbReference>
<dbReference type="PROSITE" id="PS00041">
    <property type="entry name" value="HTH_ARAC_FAMILY_1"/>
    <property type="match status" value="1"/>
</dbReference>
<dbReference type="PROSITE" id="PS01124">
    <property type="entry name" value="HTH_ARAC_FAMILY_2"/>
    <property type="match status" value="1"/>
</dbReference>
<feature type="chain" id="PRO_0000194510" description="HTH-type DNA-binding transcriptional activator EutR">
    <location>
        <begin position="1"/>
        <end position="350"/>
    </location>
</feature>
<feature type="domain" description="HTH araC/xylS-type" evidence="1">
    <location>
        <begin position="243"/>
        <end position="344"/>
    </location>
</feature>
<feature type="DNA-binding region" description="H-T-H motif" evidence="1">
    <location>
        <begin position="260"/>
        <end position="281"/>
    </location>
</feature>
<feature type="DNA-binding region" description="H-T-H motif" evidence="1">
    <location>
        <begin position="311"/>
        <end position="334"/>
    </location>
</feature>
<evidence type="ECO:0000255" key="1">
    <source>
        <dbReference type="PROSITE-ProRule" id="PRU00593"/>
    </source>
</evidence>
<evidence type="ECO:0000269" key="2">
    <source>
    </source>
</evidence>
<evidence type="ECO:0000269" key="3">
    <source>
    </source>
</evidence>
<evidence type="ECO:0000269" key="4">
    <source>
    </source>
</evidence>
<evidence type="ECO:0000269" key="5">
    <source>
    </source>
</evidence>
<evidence type="ECO:0000269" key="6">
    <source>
    </source>
</evidence>
<evidence type="ECO:0000269" key="7">
    <source>
    </source>
</evidence>
<evidence type="ECO:0000269" key="8">
    <source>
    </source>
</evidence>
<evidence type="ECO:0000269" key="9">
    <source>
    </source>
</evidence>
<evidence type="ECO:0000303" key="10">
    <source>
    </source>
</evidence>
<evidence type="ECO:0000305" key="11"/>
<evidence type="ECO:0000305" key="12">
    <source>
    </source>
</evidence>
<evidence type="ECO:0000305" key="13">
    <source>
    </source>
</evidence>
<evidence type="ECO:0000305" key="14">
    <source>
    </source>
</evidence>
<keyword id="KW-0010">Activator</keyword>
<keyword id="KW-0238">DNA-binding</keyword>
<keyword id="KW-1185">Reference proteome</keyword>
<keyword id="KW-0804">Transcription</keyword>
<keyword id="KW-0805">Transcription regulation</keyword>
<keyword id="KW-0843">Virulence</keyword>
<protein>
    <recommendedName>
        <fullName evidence="11">HTH-type DNA-binding transcriptional activator EutR</fullName>
    </recommendedName>
    <alternativeName>
        <fullName>Ethanolamine operon regulatory protein</fullName>
    </alternativeName>
</protein>
<proteinExistence type="evidence at protein level"/>
<name>EUTR_SALTY</name>
<sequence length="350" mass="40055">MKKTRTANLHHLYHEALPEDVKLTPRVEVDNVHQRRTTDVYEHALTITAWQQIYDQLHPGKFHGEFTEILLDEIQVFREYTGLALRQSCLVWPNSFWFGIPATRGEQGFIGAQGLGSAEIATRPGGTEFELSTPDDYTILGVVISEDVISRQATFLHNPERVLHMLRNQLALEVKEQHKAALWGFVQQALATFSESPETLHQPAVRKVLSDNLLLAMGTMLEEAKPIHSAESISHQGYRRLLSRAREYVLENMSEPLTVLDLCNQLHVSRRTLQNAFHAILGIGPNAWLKRIRLNAVRRELISPWSQSATVKDAAMQWGFWHLGQFATDYQQLFAEKPSLTLHQRMRQWA</sequence>
<organism>
    <name type="scientific">Salmonella typhimurium (strain LT2 / SGSC1412 / ATCC 700720)</name>
    <dbReference type="NCBI Taxonomy" id="99287"/>
    <lineage>
        <taxon>Bacteria</taxon>
        <taxon>Pseudomonadati</taxon>
        <taxon>Pseudomonadota</taxon>
        <taxon>Gammaproteobacteria</taxon>
        <taxon>Enterobacterales</taxon>
        <taxon>Enterobacteriaceae</taxon>
        <taxon>Salmonella</taxon>
    </lineage>
</organism>
<accession>Q9ZFU7</accession>
<comment type="function">
    <text evidence="3 4 9 12 13 14">Activates the transcription of the eut operon, allowing utilization of ethanolamine (EA). Positively regulates its own transcription (Probable) (PubMed:1328159, PubMed:8113167). Probably binds EA and vitamin B12 as effectors (Probable). Competes with ethanolamine ammonia-lysase (EAL, the first enzyme in the EA degradation pathway) for adenosylcobalamin (PubMed:8113167). Ethanolamine-associated signaling mediated via this protein, but not EA degradation, impacts S.typhimurium survival within macrophages. Binds the promoter of ssrB and eutS in vitro; in mouse infection models binding to ssrB probably induces all 4 operons of pathogenicity island SPI-2 (PubMed:26565973).</text>
</comment>
<comment type="function">
    <text evidence="7 8">Expression of the eut operon allows this bacteria to use ethanolamine (EA) as a carbon, nitrogen and energy source. It relies on cobalamin (vitamin B12) both as a cofactor for the ethanolamine ammonia-lyase (EAL) activity and to induce the operon (PubMed:3045078). EA enhances bacterial survival in macrophages in a concentration-dependent manner, suggesting it is an important nutrient in infection (PubMed:29531136).</text>
</comment>
<comment type="pathway">
    <text evidence="8">Amine and polyamine degradation; ethanolamine degradation.</text>
</comment>
<comment type="induction">
    <text evidence="2 3 4 8 13">Part of the 17-gene eut operon transcribed from a single promoter, positively regulates its own expression, induced by ethanolamine and adenosylcobalamin (AdoCbl, vitamin B12). This is the last gene in the operon and has a second weaker promoter that is constitutively transcribed at a low level (Probable) (PubMed:10464203, PubMed:1328159, PubMed:26565973, PubMed:3045078). Subject to catabolite repression; expression is substantially lower during growth on glucose than during growth versus succinate. Catabolite repression is overcome by adding exogenous cAMP to the glucose growth media (PubMed:1328159). Induced after phagocytosis by mouse RAW macrophages and in spleen in mouse infection; the whole eut operon is not induced (PubMed:26565973).</text>
</comment>
<comment type="disruption phenotype">
    <text evidence="5 6 7">Mutations prevent expression of the entire eut operon (PubMed:2656649). No phenotype during bacterial growth in vitro. About 10-fold outcompeted by wild-type in mouse intestines at 2 and 4 days following oral infection. Loss of induction of pathogenicity island SPI-2 in mouse macrophages (PubMed:26684793). About 25% reduction in survival in mouse macrophage assays. Bacteria growth is not enhanced by exogenous EA in macrophage survival assays (PubMed:29531136).</text>
</comment>